<proteinExistence type="evidence at protein level"/>
<keyword id="KW-1185">Reference proteome</keyword>
<keyword id="KW-0346">Stress response</keyword>
<keyword id="KW-0808">Transferase</keyword>
<keyword id="KW-0833">Ubl conjugation pathway</keyword>
<reference key="1">
    <citation type="journal article" date="2000" name="Nature">
        <title>Sequence and analysis of chromosome 3 of the plant Arabidopsis thaliana.</title>
        <authorList>
            <person name="Salanoubat M."/>
            <person name="Lemcke K."/>
            <person name="Rieger M."/>
            <person name="Ansorge W."/>
            <person name="Unseld M."/>
            <person name="Fartmann B."/>
            <person name="Valle G."/>
            <person name="Bloecker H."/>
            <person name="Perez-Alonso M."/>
            <person name="Obermaier B."/>
            <person name="Delseny M."/>
            <person name="Boutry M."/>
            <person name="Grivell L.A."/>
            <person name="Mache R."/>
            <person name="Puigdomenech P."/>
            <person name="De Simone V."/>
            <person name="Choisne N."/>
            <person name="Artiguenave F."/>
            <person name="Robert C."/>
            <person name="Brottier P."/>
            <person name="Wincker P."/>
            <person name="Cattolico L."/>
            <person name="Weissenbach J."/>
            <person name="Saurin W."/>
            <person name="Quetier F."/>
            <person name="Schaefer M."/>
            <person name="Mueller-Auer S."/>
            <person name="Gabel C."/>
            <person name="Fuchs M."/>
            <person name="Benes V."/>
            <person name="Wurmbach E."/>
            <person name="Drzonek H."/>
            <person name="Erfle H."/>
            <person name="Jordan N."/>
            <person name="Bangert S."/>
            <person name="Wiedelmann R."/>
            <person name="Kranz H."/>
            <person name="Voss H."/>
            <person name="Holland R."/>
            <person name="Brandt P."/>
            <person name="Nyakatura G."/>
            <person name="Vezzi A."/>
            <person name="D'Angelo M."/>
            <person name="Pallavicini A."/>
            <person name="Toppo S."/>
            <person name="Simionati B."/>
            <person name="Conrad A."/>
            <person name="Hornischer K."/>
            <person name="Kauer G."/>
            <person name="Loehnert T.-H."/>
            <person name="Nordsiek G."/>
            <person name="Reichelt J."/>
            <person name="Scharfe M."/>
            <person name="Schoen O."/>
            <person name="Bargues M."/>
            <person name="Terol J."/>
            <person name="Climent J."/>
            <person name="Navarro P."/>
            <person name="Collado C."/>
            <person name="Perez-Perez A."/>
            <person name="Ottenwaelder B."/>
            <person name="Duchemin D."/>
            <person name="Cooke R."/>
            <person name="Laudie M."/>
            <person name="Berger-Llauro C."/>
            <person name="Purnelle B."/>
            <person name="Masuy D."/>
            <person name="de Haan M."/>
            <person name="Maarse A.C."/>
            <person name="Alcaraz J.-P."/>
            <person name="Cottet A."/>
            <person name="Casacuberta E."/>
            <person name="Monfort A."/>
            <person name="Argiriou A."/>
            <person name="Flores M."/>
            <person name="Liguori R."/>
            <person name="Vitale D."/>
            <person name="Mannhaupt G."/>
            <person name="Haase D."/>
            <person name="Schoof H."/>
            <person name="Rudd S."/>
            <person name="Zaccaria P."/>
            <person name="Mewes H.-W."/>
            <person name="Mayer K.F.X."/>
            <person name="Kaul S."/>
            <person name="Town C.D."/>
            <person name="Koo H.L."/>
            <person name="Tallon L.J."/>
            <person name="Jenkins J."/>
            <person name="Rooney T."/>
            <person name="Rizzo M."/>
            <person name="Walts A."/>
            <person name="Utterback T."/>
            <person name="Fujii C.Y."/>
            <person name="Shea T.P."/>
            <person name="Creasy T.H."/>
            <person name="Haas B."/>
            <person name="Maiti R."/>
            <person name="Wu D."/>
            <person name="Peterson J."/>
            <person name="Van Aken S."/>
            <person name="Pai G."/>
            <person name="Militscher J."/>
            <person name="Sellers P."/>
            <person name="Gill J.E."/>
            <person name="Feldblyum T.V."/>
            <person name="Preuss D."/>
            <person name="Lin X."/>
            <person name="Nierman W.C."/>
            <person name="Salzberg S.L."/>
            <person name="White O."/>
            <person name="Venter J.C."/>
            <person name="Fraser C.M."/>
            <person name="Kaneko T."/>
            <person name="Nakamura Y."/>
            <person name="Sato S."/>
            <person name="Kato T."/>
            <person name="Asamizu E."/>
            <person name="Sasamoto S."/>
            <person name="Kimura T."/>
            <person name="Idesawa K."/>
            <person name="Kawashima K."/>
            <person name="Kishida Y."/>
            <person name="Kiyokawa C."/>
            <person name="Kohara M."/>
            <person name="Matsumoto M."/>
            <person name="Matsuno A."/>
            <person name="Muraki A."/>
            <person name="Nakayama S."/>
            <person name="Nakazaki N."/>
            <person name="Shinpo S."/>
            <person name="Takeuchi C."/>
            <person name="Wada T."/>
            <person name="Watanabe A."/>
            <person name="Yamada M."/>
            <person name="Yasuda M."/>
            <person name="Tabata S."/>
        </authorList>
    </citation>
    <scope>NUCLEOTIDE SEQUENCE [LARGE SCALE GENOMIC DNA]</scope>
    <source>
        <strain>cv. Columbia</strain>
    </source>
</reference>
<reference key="2">
    <citation type="journal article" date="2017" name="Plant J.">
        <title>Araport11: a complete reannotation of the Arabidopsis thaliana reference genome.</title>
        <authorList>
            <person name="Cheng C.Y."/>
            <person name="Krishnakumar V."/>
            <person name="Chan A.P."/>
            <person name="Thibaud-Nissen F."/>
            <person name="Schobel S."/>
            <person name="Town C.D."/>
        </authorList>
    </citation>
    <scope>GENOME REANNOTATION</scope>
    <source>
        <strain>cv. Columbia</strain>
    </source>
</reference>
<reference key="3">
    <citation type="journal article" date="2019" name="Cell Res.">
        <title>An H3K27me3 demethylase-HSFA2 regulatory loop orchestrates transgenerational thermomemory in Arabidopsis.</title>
        <authorList>
            <person name="Liu J."/>
            <person name="Feng L."/>
            <person name="Gu X."/>
            <person name="Deng X."/>
            <person name="Qiu Q."/>
            <person name="Li Q."/>
            <person name="Zhang Y."/>
            <person name="Wang M."/>
            <person name="Deng Y."/>
            <person name="Wang E."/>
            <person name="He Y."/>
            <person name="Baeurle I."/>
            <person name="Li J."/>
            <person name="Cao X."/>
            <person name="He Z."/>
        </authorList>
    </citation>
    <scope>FUNCTION</scope>
    <scope>DISRUPTION PHENOTYPE</scope>
    <scope>CATALYTIC ACTIVITY</scope>
    <scope>PATHWAY</scope>
    <scope>SUBCELLULAR LOCATION</scope>
    <scope>INTERACTION WITH SGS3</scope>
    <scope>INDUCTION BY HEAT</scope>
    <source>
        <strain>cv. Columbia</strain>
    </source>
</reference>
<comment type="function">
    <text evidence="2">E3 ubiquitin-protein ligase which triggers the ubiquitination and subsequent degradation of SGS3 in response to heat (PubMed:30778176). Involved in the mechanisms necessary for quick response to heat and subsequent heritable transgenerational memory of heat acclimation (global warming) such as early flowering and attenuated immunity; this process includes epigenetic regulation as well as post-transcriptional gene silencing (PTGS) (PubMed:30778176). In response to heat, HSFA2 is activated and promotes the expression of REF6 which in turn derepresses HSFA2, thus establishing an inheritable feedback loop able to trigger SGIP1 and subsequent SGIP1-mediated SGS3 degradation; this prevents the biosynthesis of trans-acting siRNA (tasiRNA) and leads to the release of HTT5, which drives early flowering but attenuates immunity (PubMed:30778176).</text>
</comment>
<comment type="catalytic activity">
    <reaction evidence="2">
        <text>S-ubiquitinyl-[E2 ubiquitin-conjugating enzyme]-L-cysteine + [acceptor protein]-L-lysine = [E2 ubiquitin-conjugating enzyme]-L-cysteine + N(6)-ubiquitinyl-[acceptor protein]-L-lysine.</text>
        <dbReference type="EC" id="2.3.2.27"/>
    </reaction>
</comment>
<comment type="pathway">
    <text evidence="2">Protein degradation; proteasomal ubiquitin-dependent pathway.</text>
</comment>
<comment type="pathway">
    <text evidence="2">Protein modification; protein ubiquitination.</text>
</comment>
<comment type="subunit">
    <text evidence="2">Interacts with SGS3 in cytoplasmic granules.</text>
</comment>
<comment type="subcellular location">
    <subcellularLocation>
        <location evidence="2">Cytoplasmic granule</location>
    </subcellularLocation>
    <text evidence="2">Co-localizes with SGS3 in cytoplasmic granules.</text>
</comment>
<comment type="induction">
    <text evidence="2">Up-regulated in heat-stressed plants and unstressed progeny in a HSFA2-dependent manner.</text>
</comment>
<comment type="disruption phenotype">
    <text evidence="2">Impaired heat-induced decrease of SGS3 levels and delayed SGS3 degradation associated with abolished heat-dependent early flowering and trans-acting siRNA (tasiRNA siR255 and siR1511) accumulation (PubMed:30778176). Lost heritable transgenerational thermomemory (PubMed:30778176).</text>
</comment>
<accession>Q9SD71</accession>
<name>SGIP1_ARATH</name>
<evidence type="ECO:0000255" key="1">
    <source>
        <dbReference type="PROSITE-ProRule" id="PRU00080"/>
    </source>
</evidence>
<evidence type="ECO:0000269" key="2">
    <source>
    </source>
</evidence>
<evidence type="ECO:0000303" key="3">
    <source>
    </source>
</evidence>
<evidence type="ECO:0000305" key="4">
    <source>
    </source>
</evidence>
<evidence type="ECO:0000312" key="5">
    <source>
        <dbReference type="Araport" id="AT3G47020"/>
    </source>
</evidence>
<evidence type="ECO:0000312" key="6">
    <source>
        <dbReference type="EMBL" id="CAB61948.1"/>
    </source>
</evidence>
<gene>
    <name evidence="3" type="primary">SGIP1</name>
    <name evidence="5" type="ordered locus">At3g47020</name>
    <name evidence="6" type="ORF">F13I12.70</name>
</gene>
<organism>
    <name type="scientific">Arabidopsis thaliana</name>
    <name type="common">Mouse-ear cress</name>
    <dbReference type="NCBI Taxonomy" id="3702"/>
    <lineage>
        <taxon>Eukaryota</taxon>
        <taxon>Viridiplantae</taxon>
        <taxon>Streptophyta</taxon>
        <taxon>Embryophyta</taxon>
        <taxon>Tracheophyta</taxon>
        <taxon>Spermatophyta</taxon>
        <taxon>Magnoliopsida</taxon>
        <taxon>eudicotyledons</taxon>
        <taxon>Gunneridae</taxon>
        <taxon>Pentapetalae</taxon>
        <taxon>rosids</taxon>
        <taxon>malvids</taxon>
        <taxon>Brassicales</taxon>
        <taxon>Brassicaceae</taxon>
        <taxon>Camelineae</taxon>
        <taxon>Arabidopsis</taxon>
    </lineage>
</organism>
<sequence>MEKSQKQVTRPSNSRREYSKEIPIDLLIEIFSRLSTGDIARCRCVSKIWSSVPRLRDFTELFLKISSARPRILFTFLHNGMVPSYDNEIHAPVRGFLCSKASVYNPSTGECAYPYLELLGLWDILPVDAENLAKKVCVPKVLLASEDFACRVSTLGTEEVCWRMIQCSLPHRPFRDEICIDGVLYYLANCKGKLGILWPVPSGDQSHEVTRSFVLRILEDANKLIWSRTVYTLSFNWKKLVNKSLYIVGMTSGGEIVLSTRHLNYPFYIVYYNPVNNTAAKNEIQFGNIANKKAENSRIYTFIDHVENVEHMD</sequence>
<dbReference type="EC" id="2.3.2.27" evidence="2"/>
<dbReference type="EMBL" id="AL133292">
    <property type="protein sequence ID" value="CAB61948.1"/>
    <property type="molecule type" value="Genomic_DNA"/>
</dbReference>
<dbReference type="EMBL" id="CP002686">
    <property type="protein sequence ID" value="AEE78233.1"/>
    <property type="molecule type" value="Genomic_DNA"/>
</dbReference>
<dbReference type="PIR" id="T45638">
    <property type="entry name" value="T45638"/>
</dbReference>
<dbReference type="RefSeq" id="NP_190286.1">
    <property type="nucleotide sequence ID" value="NM_114569.1"/>
</dbReference>
<dbReference type="STRING" id="3702.Q9SD71"/>
<dbReference type="PaxDb" id="3702-AT3G47020.1"/>
<dbReference type="ProteomicsDB" id="230858"/>
<dbReference type="EnsemblPlants" id="AT3G47020.1">
    <property type="protein sequence ID" value="AT3G47020.1"/>
    <property type="gene ID" value="AT3G47020"/>
</dbReference>
<dbReference type="GeneID" id="823855"/>
<dbReference type="Gramene" id="AT3G47020.1">
    <property type="protein sequence ID" value="AT3G47020.1"/>
    <property type="gene ID" value="AT3G47020"/>
</dbReference>
<dbReference type="KEGG" id="ath:AT3G47020"/>
<dbReference type="Araport" id="AT3G47020"/>
<dbReference type="TAIR" id="AT3G47020">
    <property type="gene designation" value="SGIP1"/>
</dbReference>
<dbReference type="HOGENOM" id="CLU_027176_8_3_1"/>
<dbReference type="InParanoid" id="Q9SD71"/>
<dbReference type="OMA" id="RIYTFID"/>
<dbReference type="PhylomeDB" id="Q9SD71"/>
<dbReference type="UniPathway" id="UPA00143"/>
<dbReference type="UniPathway" id="UPA00144"/>
<dbReference type="PRO" id="PR:Q9SD71"/>
<dbReference type="Proteomes" id="UP000006548">
    <property type="component" value="Chromosome 3"/>
</dbReference>
<dbReference type="ExpressionAtlas" id="Q9SD71">
    <property type="expression patterns" value="baseline"/>
</dbReference>
<dbReference type="GO" id="GO:0010494">
    <property type="term" value="C:cytoplasmic stress granule"/>
    <property type="evidence" value="ECO:0000314"/>
    <property type="project" value="UniProtKB"/>
</dbReference>
<dbReference type="GO" id="GO:0061630">
    <property type="term" value="F:ubiquitin protein ligase activity"/>
    <property type="evidence" value="ECO:0000314"/>
    <property type="project" value="TAIR"/>
</dbReference>
<dbReference type="GO" id="GO:0010286">
    <property type="term" value="P:heat acclimation"/>
    <property type="evidence" value="ECO:0000315"/>
    <property type="project" value="UniProtKB"/>
</dbReference>
<dbReference type="GO" id="GO:0043161">
    <property type="term" value="P:proteasome-mediated ubiquitin-dependent protein catabolic process"/>
    <property type="evidence" value="ECO:0007669"/>
    <property type="project" value="UniProtKB-UniPathway"/>
</dbReference>
<dbReference type="GO" id="GO:0016567">
    <property type="term" value="P:protein ubiquitination"/>
    <property type="evidence" value="ECO:0007669"/>
    <property type="project" value="UniProtKB-UniPathway"/>
</dbReference>
<dbReference type="GO" id="GO:2000028">
    <property type="term" value="P:regulation of photoperiodism, flowering"/>
    <property type="evidence" value="ECO:0000315"/>
    <property type="project" value="UniProtKB"/>
</dbReference>
<dbReference type="GO" id="GO:0070921">
    <property type="term" value="P:regulation of siRNA processing"/>
    <property type="evidence" value="ECO:0000315"/>
    <property type="project" value="UniProtKB"/>
</dbReference>
<dbReference type="GO" id="GO:0009408">
    <property type="term" value="P:response to heat"/>
    <property type="evidence" value="ECO:0000315"/>
    <property type="project" value="UniProtKB"/>
</dbReference>
<dbReference type="Gene3D" id="1.20.1280.50">
    <property type="match status" value="1"/>
</dbReference>
<dbReference type="InterPro" id="IPR013187">
    <property type="entry name" value="F-box-assoc_dom_typ3"/>
</dbReference>
<dbReference type="InterPro" id="IPR017451">
    <property type="entry name" value="F-box-assoc_interact_dom"/>
</dbReference>
<dbReference type="InterPro" id="IPR036047">
    <property type="entry name" value="F-box-like_dom_sf"/>
</dbReference>
<dbReference type="InterPro" id="IPR001810">
    <property type="entry name" value="F-box_dom"/>
</dbReference>
<dbReference type="NCBIfam" id="TIGR01640">
    <property type="entry name" value="F_box_assoc_1"/>
    <property type="match status" value="1"/>
</dbReference>
<dbReference type="PANTHER" id="PTHR31111">
    <property type="entry name" value="BNAA05G37150D PROTEIN-RELATED"/>
    <property type="match status" value="1"/>
</dbReference>
<dbReference type="PANTHER" id="PTHR31111:SF94">
    <property type="entry name" value="E3 UBIQUITIN-PROTEIN LIGASE SGIP1"/>
    <property type="match status" value="1"/>
</dbReference>
<dbReference type="Pfam" id="PF00646">
    <property type="entry name" value="F-box"/>
    <property type="match status" value="1"/>
</dbReference>
<dbReference type="Pfam" id="PF08268">
    <property type="entry name" value="FBA_3"/>
    <property type="match status" value="1"/>
</dbReference>
<dbReference type="SMART" id="SM00256">
    <property type="entry name" value="FBOX"/>
    <property type="match status" value="1"/>
</dbReference>
<dbReference type="SUPFAM" id="SSF81383">
    <property type="entry name" value="F-box domain"/>
    <property type="match status" value="1"/>
</dbReference>
<protein>
    <recommendedName>
        <fullName evidence="4">E3 ubiquitin-protein ligase SGIP1</fullName>
        <ecNumber evidence="2">2.3.2.27</ecNumber>
    </recommendedName>
    <alternativeName>
        <fullName evidence="3">SGS3-INTERACTING PROTEIN 1</fullName>
    </alternativeName>
</protein>
<feature type="chain" id="PRO_0000283464" description="E3 ubiquitin-protein ligase SGIP1">
    <location>
        <begin position="1"/>
        <end position="313"/>
    </location>
</feature>
<feature type="domain" description="F-box" evidence="1">
    <location>
        <begin position="16"/>
        <end position="65"/>
    </location>
</feature>